<proteinExistence type="inferred from homology"/>
<sequence>MTVQTFTPNQTTTLETAKKTIAEQSQNSQTTGNKIGFVSLGCPKNLVDSERILTQLRTEGYEIVNSYHDSDVVIVNTCGFIDSAVQESLDTIGEALKENGKVIVTGCLGAREDEIRQVHPNVLGITGPHAYQNVLEHVHQYAPKPAHNPFTSLVPDHGVKLTPKHYAYLKISEGCNHRCTFCIIPSMRGDLVSRPVGEIIGEAERLKNAGVKELLVISQDTSAYGVDTKHSLGFANGSPVRHNIKALSEELGKMGIWVRLHYVYPYPHVDEIIPLMAEGKVLPYLDIPFQHASPRVLKMMKRPGQAERTLERIKKWREICPELVIRSTFIVGFPGETEEDFQILLDWLKEAQLDRVGCFKYSPVEGAAANEIEDQIPEDVKQDRFERFMLVQQEISAAKLQKRIGSTMQVLIDEVDDEGAIGRTYADAPEIDGLVYLNGETNLKPGELVNVVIEHADEYDLWGSVLHDAQ</sequence>
<comment type="function">
    <text evidence="1">Catalyzes the methylthiolation of an aspartic acid residue of ribosomal protein uS12.</text>
</comment>
<comment type="catalytic activity">
    <reaction evidence="1">
        <text>L-aspartate(89)-[ribosomal protein uS12]-hydrogen + (sulfur carrier)-SH + AH2 + 2 S-adenosyl-L-methionine = 3-methylsulfanyl-L-aspartate(89)-[ribosomal protein uS12]-hydrogen + (sulfur carrier)-H + 5'-deoxyadenosine + L-methionine + A + S-adenosyl-L-homocysteine + 2 H(+)</text>
        <dbReference type="Rhea" id="RHEA:37087"/>
        <dbReference type="Rhea" id="RHEA-COMP:10460"/>
        <dbReference type="Rhea" id="RHEA-COMP:10461"/>
        <dbReference type="Rhea" id="RHEA-COMP:14737"/>
        <dbReference type="Rhea" id="RHEA-COMP:14739"/>
        <dbReference type="ChEBI" id="CHEBI:13193"/>
        <dbReference type="ChEBI" id="CHEBI:15378"/>
        <dbReference type="ChEBI" id="CHEBI:17319"/>
        <dbReference type="ChEBI" id="CHEBI:17499"/>
        <dbReference type="ChEBI" id="CHEBI:29917"/>
        <dbReference type="ChEBI" id="CHEBI:29961"/>
        <dbReference type="ChEBI" id="CHEBI:57844"/>
        <dbReference type="ChEBI" id="CHEBI:57856"/>
        <dbReference type="ChEBI" id="CHEBI:59789"/>
        <dbReference type="ChEBI" id="CHEBI:64428"/>
        <dbReference type="ChEBI" id="CHEBI:73599"/>
        <dbReference type="EC" id="2.8.4.4"/>
    </reaction>
</comment>
<comment type="cofactor">
    <cofactor evidence="1">
        <name>[4Fe-4S] cluster</name>
        <dbReference type="ChEBI" id="CHEBI:49883"/>
    </cofactor>
    <text evidence="1">Binds 2 [4Fe-4S] clusters. One cluster is coordinated with 3 cysteines and an exchangeable S-adenosyl-L-methionine.</text>
</comment>
<comment type="subcellular location">
    <subcellularLocation>
        <location evidence="1">Cytoplasm</location>
    </subcellularLocation>
</comment>
<comment type="similarity">
    <text evidence="1">Belongs to the methylthiotransferase family. RimO subfamily.</text>
</comment>
<protein>
    <recommendedName>
        <fullName evidence="1">Ribosomal protein uS12 methylthiotransferase RimO</fullName>
        <shortName evidence="1">uS12 MTTase</shortName>
        <shortName evidence="1">uS12 methylthiotransferase</shortName>
        <ecNumber evidence="1">2.8.4.4</ecNumber>
    </recommendedName>
    <alternativeName>
        <fullName evidence="1">Ribosomal protein uS12 (aspartate-C(3))-methylthiotransferase</fullName>
    </alternativeName>
    <alternativeName>
        <fullName evidence="1">Ribosome maturation factor RimO</fullName>
    </alternativeName>
</protein>
<organism>
    <name type="scientific">Vibrio cholerae serotype O1 (strain ATCC 39541 / Classical Ogawa 395 / O395)</name>
    <dbReference type="NCBI Taxonomy" id="345073"/>
    <lineage>
        <taxon>Bacteria</taxon>
        <taxon>Pseudomonadati</taxon>
        <taxon>Pseudomonadota</taxon>
        <taxon>Gammaproteobacteria</taxon>
        <taxon>Vibrionales</taxon>
        <taxon>Vibrionaceae</taxon>
        <taxon>Vibrio</taxon>
    </lineage>
</organism>
<dbReference type="EC" id="2.8.4.4" evidence="1"/>
<dbReference type="EMBL" id="CP000627">
    <property type="protein sequence ID" value="ABQ22093.1"/>
    <property type="molecule type" value="Genomic_DNA"/>
</dbReference>
<dbReference type="EMBL" id="CP001235">
    <property type="protein sequence ID" value="ACP10718.1"/>
    <property type="molecule type" value="Genomic_DNA"/>
</dbReference>
<dbReference type="RefSeq" id="WP_000218155.1">
    <property type="nucleotide sequence ID" value="NZ_JAACZH010000007.1"/>
</dbReference>
<dbReference type="SMR" id="A5F514"/>
<dbReference type="KEGG" id="vco:VC0395_A2197"/>
<dbReference type="KEGG" id="vcr:VC395_2733"/>
<dbReference type="PATRIC" id="fig|345073.21.peg.2633"/>
<dbReference type="eggNOG" id="COG0621">
    <property type="taxonomic scope" value="Bacteria"/>
</dbReference>
<dbReference type="HOGENOM" id="CLU_018697_0_0_6"/>
<dbReference type="OrthoDB" id="9805215at2"/>
<dbReference type="Proteomes" id="UP000000249">
    <property type="component" value="Chromosome 2"/>
</dbReference>
<dbReference type="GO" id="GO:0005829">
    <property type="term" value="C:cytosol"/>
    <property type="evidence" value="ECO:0007669"/>
    <property type="project" value="TreeGrafter"/>
</dbReference>
<dbReference type="GO" id="GO:0051539">
    <property type="term" value="F:4 iron, 4 sulfur cluster binding"/>
    <property type="evidence" value="ECO:0007669"/>
    <property type="project" value="UniProtKB-UniRule"/>
</dbReference>
<dbReference type="GO" id="GO:0035599">
    <property type="term" value="F:aspartic acid methylthiotransferase activity"/>
    <property type="evidence" value="ECO:0007669"/>
    <property type="project" value="TreeGrafter"/>
</dbReference>
<dbReference type="GO" id="GO:0046872">
    <property type="term" value="F:metal ion binding"/>
    <property type="evidence" value="ECO:0007669"/>
    <property type="project" value="UniProtKB-KW"/>
</dbReference>
<dbReference type="GO" id="GO:0103039">
    <property type="term" value="F:protein methylthiotransferase activity"/>
    <property type="evidence" value="ECO:0007669"/>
    <property type="project" value="UniProtKB-EC"/>
</dbReference>
<dbReference type="GO" id="GO:0006400">
    <property type="term" value="P:tRNA modification"/>
    <property type="evidence" value="ECO:0007669"/>
    <property type="project" value="InterPro"/>
</dbReference>
<dbReference type="CDD" id="cd01335">
    <property type="entry name" value="Radical_SAM"/>
    <property type="match status" value="1"/>
</dbReference>
<dbReference type="FunFam" id="2.40.50.140:FF:000060">
    <property type="entry name" value="Ribosomal protein S12 methylthiotransferase RimO"/>
    <property type="match status" value="1"/>
</dbReference>
<dbReference type="FunFam" id="3.40.50.12160:FF:000002">
    <property type="entry name" value="Ribosomal protein S12 methylthiotransferase RimO"/>
    <property type="match status" value="1"/>
</dbReference>
<dbReference type="FunFam" id="3.80.30.20:FF:000001">
    <property type="entry name" value="tRNA-2-methylthio-N(6)-dimethylallyladenosine synthase 2"/>
    <property type="match status" value="1"/>
</dbReference>
<dbReference type="Gene3D" id="3.40.50.12160">
    <property type="entry name" value="Methylthiotransferase, N-terminal domain"/>
    <property type="match status" value="1"/>
</dbReference>
<dbReference type="Gene3D" id="2.40.50.140">
    <property type="entry name" value="Nucleic acid-binding proteins"/>
    <property type="match status" value="1"/>
</dbReference>
<dbReference type="Gene3D" id="3.80.30.20">
    <property type="entry name" value="tm_1862 like domain"/>
    <property type="match status" value="1"/>
</dbReference>
<dbReference type="HAMAP" id="MF_01865">
    <property type="entry name" value="MTTase_RimO"/>
    <property type="match status" value="1"/>
</dbReference>
<dbReference type="InterPro" id="IPR006638">
    <property type="entry name" value="Elp3/MiaA/NifB-like_rSAM"/>
</dbReference>
<dbReference type="InterPro" id="IPR005839">
    <property type="entry name" value="Methylthiotransferase"/>
</dbReference>
<dbReference type="InterPro" id="IPR020612">
    <property type="entry name" value="Methylthiotransferase_CS"/>
</dbReference>
<dbReference type="InterPro" id="IPR013848">
    <property type="entry name" value="Methylthiotransferase_N"/>
</dbReference>
<dbReference type="InterPro" id="IPR038135">
    <property type="entry name" value="Methylthiotransferase_N_sf"/>
</dbReference>
<dbReference type="InterPro" id="IPR012340">
    <property type="entry name" value="NA-bd_OB-fold"/>
</dbReference>
<dbReference type="InterPro" id="IPR005840">
    <property type="entry name" value="Ribosomal_uS12_MeSTrfase_RimO"/>
</dbReference>
<dbReference type="InterPro" id="IPR007197">
    <property type="entry name" value="rSAM"/>
</dbReference>
<dbReference type="InterPro" id="IPR023404">
    <property type="entry name" value="rSAM_horseshoe"/>
</dbReference>
<dbReference type="InterPro" id="IPR002792">
    <property type="entry name" value="TRAM_dom"/>
</dbReference>
<dbReference type="NCBIfam" id="TIGR01125">
    <property type="entry name" value="30S ribosomal protein S12 methylthiotransferase RimO"/>
    <property type="match status" value="1"/>
</dbReference>
<dbReference type="NCBIfam" id="TIGR00089">
    <property type="entry name" value="MiaB/RimO family radical SAM methylthiotransferase"/>
    <property type="match status" value="1"/>
</dbReference>
<dbReference type="PANTHER" id="PTHR43837">
    <property type="entry name" value="RIBOSOMAL PROTEIN S12 METHYLTHIOTRANSFERASE RIMO"/>
    <property type="match status" value="1"/>
</dbReference>
<dbReference type="PANTHER" id="PTHR43837:SF1">
    <property type="entry name" value="RIBOSOMAL PROTEIN US12 METHYLTHIOTRANSFERASE RIMO"/>
    <property type="match status" value="1"/>
</dbReference>
<dbReference type="Pfam" id="PF04055">
    <property type="entry name" value="Radical_SAM"/>
    <property type="match status" value="1"/>
</dbReference>
<dbReference type="Pfam" id="PF18693">
    <property type="entry name" value="TRAM_2"/>
    <property type="match status" value="1"/>
</dbReference>
<dbReference type="Pfam" id="PF00919">
    <property type="entry name" value="UPF0004"/>
    <property type="match status" value="1"/>
</dbReference>
<dbReference type="SFLD" id="SFLDG01082">
    <property type="entry name" value="B12-binding_domain_containing"/>
    <property type="match status" value="1"/>
</dbReference>
<dbReference type="SFLD" id="SFLDS00029">
    <property type="entry name" value="Radical_SAM"/>
    <property type="match status" value="1"/>
</dbReference>
<dbReference type="SFLD" id="SFLDF00274">
    <property type="entry name" value="ribosomal_protein_S12_methylth"/>
    <property type="match status" value="1"/>
</dbReference>
<dbReference type="SMART" id="SM00729">
    <property type="entry name" value="Elp3"/>
    <property type="match status" value="1"/>
</dbReference>
<dbReference type="SUPFAM" id="SSF102114">
    <property type="entry name" value="Radical SAM enzymes"/>
    <property type="match status" value="1"/>
</dbReference>
<dbReference type="PROSITE" id="PS51449">
    <property type="entry name" value="MTTASE_N"/>
    <property type="match status" value="1"/>
</dbReference>
<dbReference type="PROSITE" id="PS01278">
    <property type="entry name" value="MTTASE_RADICAL"/>
    <property type="match status" value="1"/>
</dbReference>
<dbReference type="PROSITE" id="PS51918">
    <property type="entry name" value="RADICAL_SAM"/>
    <property type="match status" value="1"/>
</dbReference>
<dbReference type="PROSITE" id="PS50926">
    <property type="entry name" value="TRAM"/>
    <property type="match status" value="1"/>
</dbReference>
<reference key="1">
    <citation type="submission" date="2007-03" db="EMBL/GenBank/DDBJ databases">
        <authorList>
            <person name="Heidelberg J."/>
        </authorList>
    </citation>
    <scope>NUCLEOTIDE SEQUENCE [LARGE SCALE GENOMIC DNA]</scope>
    <source>
        <strain>ATCC 39541 / Classical Ogawa 395 / O395</strain>
    </source>
</reference>
<reference key="2">
    <citation type="journal article" date="2008" name="PLoS ONE">
        <title>A recalibrated molecular clock and independent origins for the cholera pandemic clones.</title>
        <authorList>
            <person name="Feng L."/>
            <person name="Reeves P.R."/>
            <person name="Lan R."/>
            <person name="Ren Y."/>
            <person name="Gao C."/>
            <person name="Zhou Z."/>
            <person name="Ren Y."/>
            <person name="Cheng J."/>
            <person name="Wang W."/>
            <person name="Wang J."/>
            <person name="Qian W."/>
            <person name="Li D."/>
            <person name="Wang L."/>
        </authorList>
    </citation>
    <scope>NUCLEOTIDE SEQUENCE [LARGE SCALE GENOMIC DNA]</scope>
    <source>
        <strain>ATCC 39541 / Classical Ogawa 395 / O395</strain>
    </source>
</reference>
<gene>
    <name evidence="1" type="primary">rimO</name>
    <name type="ordered locus">VC0395_A2197</name>
    <name type="ordered locus">VC395_2733</name>
</gene>
<evidence type="ECO:0000255" key="1">
    <source>
        <dbReference type="HAMAP-Rule" id="MF_01865"/>
    </source>
</evidence>
<evidence type="ECO:0000255" key="2">
    <source>
        <dbReference type="PROSITE-ProRule" id="PRU01266"/>
    </source>
</evidence>
<keyword id="KW-0004">4Fe-4S</keyword>
<keyword id="KW-0963">Cytoplasm</keyword>
<keyword id="KW-0408">Iron</keyword>
<keyword id="KW-0411">Iron-sulfur</keyword>
<keyword id="KW-0479">Metal-binding</keyword>
<keyword id="KW-0949">S-adenosyl-L-methionine</keyword>
<keyword id="KW-0808">Transferase</keyword>
<feature type="chain" id="PRO_0000375064" description="Ribosomal protein uS12 methylthiotransferase RimO">
    <location>
        <begin position="1"/>
        <end position="470"/>
    </location>
</feature>
<feature type="domain" description="MTTase N-terminal" evidence="1">
    <location>
        <begin position="33"/>
        <end position="143"/>
    </location>
</feature>
<feature type="domain" description="Radical SAM core" evidence="2">
    <location>
        <begin position="161"/>
        <end position="398"/>
    </location>
</feature>
<feature type="domain" description="TRAM" evidence="1">
    <location>
        <begin position="401"/>
        <end position="467"/>
    </location>
</feature>
<feature type="binding site" evidence="1">
    <location>
        <position position="42"/>
    </location>
    <ligand>
        <name>[4Fe-4S] cluster</name>
        <dbReference type="ChEBI" id="CHEBI:49883"/>
        <label>1</label>
    </ligand>
</feature>
<feature type="binding site" evidence="1">
    <location>
        <position position="78"/>
    </location>
    <ligand>
        <name>[4Fe-4S] cluster</name>
        <dbReference type="ChEBI" id="CHEBI:49883"/>
        <label>1</label>
    </ligand>
</feature>
<feature type="binding site" evidence="1">
    <location>
        <position position="107"/>
    </location>
    <ligand>
        <name>[4Fe-4S] cluster</name>
        <dbReference type="ChEBI" id="CHEBI:49883"/>
        <label>1</label>
    </ligand>
</feature>
<feature type="binding site" evidence="1">
    <location>
        <position position="175"/>
    </location>
    <ligand>
        <name>[4Fe-4S] cluster</name>
        <dbReference type="ChEBI" id="CHEBI:49883"/>
        <label>2</label>
        <note>4Fe-4S-S-AdoMet</note>
    </ligand>
</feature>
<feature type="binding site" evidence="1">
    <location>
        <position position="179"/>
    </location>
    <ligand>
        <name>[4Fe-4S] cluster</name>
        <dbReference type="ChEBI" id="CHEBI:49883"/>
        <label>2</label>
        <note>4Fe-4S-S-AdoMet</note>
    </ligand>
</feature>
<feature type="binding site" evidence="1">
    <location>
        <position position="182"/>
    </location>
    <ligand>
        <name>[4Fe-4S] cluster</name>
        <dbReference type="ChEBI" id="CHEBI:49883"/>
        <label>2</label>
        <note>4Fe-4S-S-AdoMet</note>
    </ligand>
</feature>
<accession>A5F514</accession>
<accession>C3LXL8</accession>
<name>RIMO_VIBC3</name>